<protein>
    <recommendedName>
        <fullName evidence="1">Probable GTP-binding protein EngB</fullName>
    </recommendedName>
</protein>
<proteinExistence type="inferred from homology"/>
<name>ENGB_LACLS</name>
<reference key="1">
    <citation type="journal article" date="2006" name="Proc. Natl. Acad. Sci. U.S.A.">
        <title>Comparative genomics of the lactic acid bacteria.</title>
        <authorList>
            <person name="Makarova K.S."/>
            <person name="Slesarev A."/>
            <person name="Wolf Y.I."/>
            <person name="Sorokin A."/>
            <person name="Mirkin B."/>
            <person name="Koonin E.V."/>
            <person name="Pavlov A."/>
            <person name="Pavlova N."/>
            <person name="Karamychev V."/>
            <person name="Polouchine N."/>
            <person name="Shakhova V."/>
            <person name="Grigoriev I."/>
            <person name="Lou Y."/>
            <person name="Rohksar D."/>
            <person name="Lucas S."/>
            <person name="Huang K."/>
            <person name="Goodstein D.M."/>
            <person name="Hawkins T."/>
            <person name="Plengvidhya V."/>
            <person name="Welker D."/>
            <person name="Hughes J."/>
            <person name="Goh Y."/>
            <person name="Benson A."/>
            <person name="Baldwin K."/>
            <person name="Lee J.-H."/>
            <person name="Diaz-Muniz I."/>
            <person name="Dosti B."/>
            <person name="Smeianov V."/>
            <person name="Wechter W."/>
            <person name="Barabote R."/>
            <person name="Lorca G."/>
            <person name="Altermann E."/>
            <person name="Barrangou R."/>
            <person name="Ganesan B."/>
            <person name="Xie Y."/>
            <person name="Rawsthorne H."/>
            <person name="Tamir D."/>
            <person name="Parker C."/>
            <person name="Breidt F."/>
            <person name="Broadbent J.R."/>
            <person name="Hutkins R."/>
            <person name="O'Sullivan D."/>
            <person name="Steele J."/>
            <person name="Unlu G."/>
            <person name="Saier M.H. Jr."/>
            <person name="Klaenhammer T."/>
            <person name="Richardson P."/>
            <person name="Kozyavkin S."/>
            <person name="Weimer B.C."/>
            <person name="Mills D.A."/>
        </authorList>
    </citation>
    <scope>NUCLEOTIDE SEQUENCE [LARGE SCALE GENOMIC DNA]</scope>
    <source>
        <strain>SK11</strain>
    </source>
</reference>
<sequence length="195" mass="22461">MTINTNNLTITISAASKKQYPENDWPEIALAGRSNVGKSSFINTLLNRKNFARTSGQPGKTQLLNFYNIDDQLHFVDVPGYGYARVSKKEREKWGKMIEEYLTTRENLKAVVSLVDIRHEPSEDDLMMYEFLKYYHIPVILVATKADKVPRGKWNKHESIIKKAMKFDSTDDFIIFSSTDKTGIEEAWTAILKYL</sequence>
<evidence type="ECO:0000255" key="1">
    <source>
        <dbReference type="HAMAP-Rule" id="MF_00321"/>
    </source>
</evidence>
<accession>Q02Z21</accession>
<dbReference type="EMBL" id="CP000425">
    <property type="protein sequence ID" value="ABJ72801.1"/>
    <property type="molecule type" value="Genomic_DNA"/>
</dbReference>
<dbReference type="SMR" id="Q02Z21"/>
<dbReference type="KEGG" id="llc:LACR_1273"/>
<dbReference type="HOGENOM" id="CLU_033732_3_0_9"/>
<dbReference type="Proteomes" id="UP000000240">
    <property type="component" value="Chromosome"/>
</dbReference>
<dbReference type="GO" id="GO:0005829">
    <property type="term" value="C:cytosol"/>
    <property type="evidence" value="ECO:0007669"/>
    <property type="project" value="TreeGrafter"/>
</dbReference>
<dbReference type="GO" id="GO:0005525">
    <property type="term" value="F:GTP binding"/>
    <property type="evidence" value="ECO:0007669"/>
    <property type="project" value="UniProtKB-UniRule"/>
</dbReference>
<dbReference type="GO" id="GO:0046872">
    <property type="term" value="F:metal ion binding"/>
    <property type="evidence" value="ECO:0007669"/>
    <property type="project" value="UniProtKB-KW"/>
</dbReference>
<dbReference type="GO" id="GO:0000917">
    <property type="term" value="P:division septum assembly"/>
    <property type="evidence" value="ECO:0007669"/>
    <property type="project" value="UniProtKB-KW"/>
</dbReference>
<dbReference type="CDD" id="cd01876">
    <property type="entry name" value="YihA_EngB"/>
    <property type="match status" value="1"/>
</dbReference>
<dbReference type="FunFam" id="3.40.50.300:FF:000098">
    <property type="entry name" value="Probable GTP-binding protein EngB"/>
    <property type="match status" value="1"/>
</dbReference>
<dbReference type="Gene3D" id="3.40.50.300">
    <property type="entry name" value="P-loop containing nucleotide triphosphate hydrolases"/>
    <property type="match status" value="1"/>
</dbReference>
<dbReference type="HAMAP" id="MF_00321">
    <property type="entry name" value="GTPase_EngB"/>
    <property type="match status" value="1"/>
</dbReference>
<dbReference type="InterPro" id="IPR030393">
    <property type="entry name" value="G_ENGB_dom"/>
</dbReference>
<dbReference type="InterPro" id="IPR006073">
    <property type="entry name" value="GTP-bd"/>
</dbReference>
<dbReference type="InterPro" id="IPR019987">
    <property type="entry name" value="GTP-bd_ribosome_bio_YsxC"/>
</dbReference>
<dbReference type="InterPro" id="IPR027417">
    <property type="entry name" value="P-loop_NTPase"/>
</dbReference>
<dbReference type="NCBIfam" id="TIGR03598">
    <property type="entry name" value="GTPase_YsxC"/>
    <property type="match status" value="1"/>
</dbReference>
<dbReference type="PANTHER" id="PTHR11649:SF13">
    <property type="entry name" value="ENGB-TYPE G DOMAIN-CONTAINING PROTEIN"/>
    <property type="match status" value="1"/>
</dbReference>
<dbReference type="PANTHER" id="PTHR11649">
    <property type="entry name" value="MSS1/TRME-RELATED GTP-BINDING PROTEIN"/>
    <property type="match status" value="1"/>
</dbReference>
<dbReference type="Pfam" id="PF01926">
    <property type="entry name" value="MMR_HSR1"/>
    <property type="match status" value="1"/>
</dbReference>
<dbReference type="PRINTS" id="PR00449">
    <property type="entry name" value="RASTRNSFRMNG"/>
</dbReference>
<dbReference type="SUPFAM" id="SSF52540">
    <property type="entry name" value="P-loop containing nucleoside triphosphate hydrolases"/>
    <property type="match status" value="1"/>
</dbReference>
<dbReference type="PROSITE" id="PS51706">
    <property type="entry name" value="G_ENGB"/>
    <property type="match status" value="1"/>
</dbReference>
<keyword id="KW-0131">Cell cycle</keyword>
<keyword id="KW-0132">Cell division</keyword>
<keyword id="KW-0342">GTP-binding</keyword>
<keyword id="KW-0460">Magnesium</keyword>
<keyword id="KW-0479">Metal-binding</keyword>
<keyword id="KW-0547">Nucleotide-binding</keyword>
<keyword id="KW-0717">Septation</keyword>
<feature type="chain" id="PRO_1000005826" description="Probable GTP-binding protein EngB">
    <location>
        <begin position="1"/>
        <end position="195"/>
    </location>
</feature>
<feature type="domain" description="EngB-type G" evidence="1">
    <location>
        <begin position="24"/>
        <end position="195"/>
    </location>
</feature>
<feature type="binding site" evidence="1">
    <location>
        <begin position="32"/>
        <end position="39"/>
    </location>
    <ligand>
        <name>GTP</name>
        <dbReference type="ChEBI" id="CHEBI:37565"/>
    </ligand>
</feature>
<feature type="binding site" evidence="1">
    <location>
        <position position="39"/>
    </location>
    <ligand>
        <name>Mg(2+)</name>
        <dbReference type="ChEBI" id="CHEBI:18420"/>
    </ligand>
</feature>
<feature type="binding site" evidence="1">
    <location>
        <begin position="59"/>
        <end position="63"/>
    </location>
    <ligand>
        <name>GTP</name>
        <dbReference type="ChEBI" id="CHEBI:37565"/>
    </ligand>
</feature>
<feature type="binding site" evidence="1">
    <location>
        <position position="61"/>
    </location>
    <ligand>
        <name>Mg(2+)</name>
        <dbReference type="ChEBI" id="CHEBI:18420"/>
    </ligand>
</feature>
<feature type="binding site" evidence="1">
    <location>
        <begin position="77"/>
        <end position="80"/>
    </location>
    <ligand>
        <name>GTP</name>
        <dbReference type="ChEBI" id="CHEBI:37565"/>
    </ligand>
</feature>
<feature type="binding site" evidence="1">
    <location>
        <begin position="144"/>
        <end position="147"/>
    </location>
    <ligand>
        <name>GTP</name>
        <dbReference type="ChEBI" id="CHEBI:37565"/>
    </ligand>
</feature>
<feature type="binding site" evidence="1">
    <location>
        <begin position="176"/>
        <end position="178"/>
    </location>
    <ligand>
        <name>GTP</name>
        <dbReference type="ChEBI" id="CHEBI:37565"/>
    </ligand>
</feature>
<organism>
    <name type="scientific">Lactococcus lactis subsp. cremoris (strain SK11)</name>
    <dbReference type="NCBI Taxonomy" id="272622"/>
    <lineage>
        <taxon>Bacteria</taxon>
        <taxon>Bacillati</taxon>
        <taxon>Bacillota</taxon>
        <taxon>Bacilli</taxon>
        <taxon>Lactobacillales</taxon>
        <taxon>Streptococcaceae</taxon>
        <taxon>Lactococcus</taxon>
        <taxon>Lactococcus cremoris subsp. cremoris</taxon>
    </lineage>
</organism>
<gene>
    <name evidence="1" type="primary">engB</name>
    <name type="ordered locus">LACR_1273</name>
</gene>
<comment type="function">
    <text evidence="1">Necessary for normal cell division and for the maintenance of normal septation.</text>
</comment>
<comment type="cofactor">
    <cofactor evidence="1">
        <name>Mg(2+)</name>
        <dbReference type="ChEBI" id="CHEBI:18420"/>
    </cofactor>
</comment>
<comment type="similarity">
    <text evidence="1">Belongs to the TRAFAC class TrmE-Era-EngA-EngB-Septin-like GTPase superfamily. EngB GTPase family.</text>
</comment>